<feature type="chain" id="PRO_0000252107" description="Allergen Asp fl 2">
    <location>
        <begin position="1" status="less than"/>
        <end position="20" status="greater than"/>
    </location>
</feature>
<feature type="non-terminal residue">
    <location>
        <position position="1"/>
    </location>
</feature>
<feature type="non-terminal residue">
    <location>
        <position position="20"/>
    </location>
</feature>
<comment type="allergen">
    <text evidence="1">Causes an allergic reaction in human. Binds to IgE and IgG.</text>
</comment>
<evidence type="ECO:0000269" key="1">
    <source ref="1"/>
</evidence>
<evidence type="ECO:0000305" key="2"/>
<dbReference type="GO" id="GO:0019863">
    <property type="term" value="F:IgE binding"/>
    <property type="evidence" value="ECO:0007669"/>
    <property type="project" value="UniProtKB-KW"/>
</dbReference>
<dbReference type="GO" id="GO:0019864">
    <property type="term" value="F:IgG binding"/>
    <property type="evidence" value="ECO:0007669"/>
    <property type="project" value="UniProtKB-KW"/>
</dbReference>
<keyword id="KW-0020">Allergen</keyword>
<keyword id="KW-0903">Direct protein sequencing</keyword>
<keyword id="KW-0389">IgE-binding protein</keyword>
<keyword id="KW-0390">IgG-binding protein</keyword>
<reference evidence="2" key="1">
    <citation type="submission" date="1999-12" db="UniProtKB">
        <authorList>
            <person name="Sarma P.U."/>
            <person name="Paliwal A."/>
            <person name="Fairwell T."/>
        </authorList>
    </citation>
    <scope>PROTEIN SEQUENCE</scope>
    <scope>ALLERGEN</scope>
    <source>
        <strain>AFL-1505 / Indian isolate</strain>
    </source>
</reference>
<sequence>FDKNQPWGVIRDLNVVNFKR</sequence>
<accession>P82258</accession>
<proteinExistence type="evidence at protein level"/>
<organism>
    <name type="scientific">Aspergillus flavus</name>
    <dbReference type="NCBI Taxonomy" id="5059"/>
    <lineage>
        <taxon>Eukaryota</taxon>
        <taxon>Fungi</taxon>
        <taxon>Dikarya</taxon>
        <taxon>Ascomycota</taxon>
        <taxon>Pezizomycotina</taxon>
        <taxon>Eurotiomycetes</taxon>
        <taxon>Eurotiomycetidae</taxon>
        <taxon>Eurotiales</taxon>
        <taxon>Aspergillaceae</taxon>
        <taxon>Aspergillus</taxon>
        <taxon>Aspergillus subgen. Circumdati</taxon>
    </lineage>
</organism>
<name>ALL2_ASPFL</name>
<protein>
    <recommendedName>
        <fullName>Allergen Asp fl 2</fullName>
    </recommendedName>
    <alternativeName>
        <fullName>Allergen Asp l 2</fullName>
    </alternativeName>
    <allergenName>Asp fl 2</allergenName>
</protein>